<dbReference type="EC" id="1.4.3.5" evidence="1"/>
<dbReference type="EMBL" id="CP000251">
    <property type="protein sequence ID" value="ABC81228.1"/>
    <property type="molecule type" value="Genomic_DNA"/>
</dbReference>
<dbReference type="RefSeq" id="WP_011420511.1">
    <property type="nucleotide sequence ID" value="NC_007760.1"/>
</dbReference>
<dbReference type="SMR" id="Q2IHV2"/>
<dbReference type="STRING" id="290397.Adeh_1455"/>
<dbReference type="KEGG" id="ade:Adeh_1455"/>
<dbReference type="eggNOG" id="COG0259">
    <property type="taxonomic scope" value="Bacteria"/>
</dbReference>
<dbReference type="HOGENOM" id="CLU_032263_2_2_7"/>
<dbReference type="OrthoDB" id="9780392at2"/>
<dbReference type="UniPathway" id="UPA01068">
    <property type="reaction ID" value="UER00304"/>
</dbReference>
<dbReference type="UniPathway" id="UPA01068">
    <property type="reaction ID" value="UER00305"/>
</dbReference>
<dbReference type="Proteomes" id="UP000001935">
    <property type="component" value="Chromosome"/>
</dbReference>
<dbReference type="GO" id="GO:0010181">
    <property type="term" value="F:FMN binding"/>
    <property type="evidence" value="ECO:0007669"/>
    <property type="project" value="InterPro"/>
</dbReference>
<dbReference type="GO" id="GO:0004733">
    <property type="term" value="F:pyridoxamine phosphate oxidase activity"/>
    <property type="evidence" value="ECO:0007669"/>
    <property type="project" value="UniProtKB-EC"/>
</dbReference>
<dbReference type="GO" id="GO:0008615">
    <property type="term" value="P:pyridoxine biosynthetic process"/>
    <property type="evidence" value="ECO:0007669"/>
    <property type="project" value="UniProtKB-KW"/>
</dbReference>
<dbReference type="Gene3D" id="2.30.110.10">
    <property type="entry name" value="Electron Transport, Fmn-binding Protein, Chain A"/>
    <property type="match status" value="1"/>
</dbReference>
<dbReference type="HAMAP" id="MF_01629">
    <property type="entry name" value="PdxH"/>
    <property type="match status" value="1"/>
</dbReference>
<dbReference type="InterPro" id="IPR000659">
    <property type="entry name" value="Pyridox_Oxase"/>
</dbReference>
<dbReference type="InterPro" id="IPR011576">
    <property type="entry name" value="Pyridox_Oxase_N"/>
</dbReference>
<dbReference type="InterPro" id="IPR019576">
    <property type="entry name" value="Pyridoxamine_oxidase_dimer_C"/>
</dbReference>
<dbReference type="InterPro" id="IPR012349">
    <property type="entry name" value="Split_barrel_FMN-bd"/>
</dbReference>
<dbReference type="NCBIfam" id="TIGR00558">
    <property type="entry name" value="pdxH"/>
    <property type="match status" value="1"/>
</dbReference>
<dbReference type="NCBIfam" id="NF004231">
    <property type="entry name" value="PRK05679.1"/>
    <property type="match status" value="1"/>
</dbReference>
<dbReference type="PANTHER" id="PTHR10851:SF0">
    <property type="entry name" value="PYRIDOXINE-5'-PHOSPHATE OXIDASE"/>
    <property type="match status" value="1"/>
</dbReference>
<dbReference type="PANTHER" id="PTHR10851">
    <property type="entry name" value="PYRIDOXINE-5-PHOSPHATE OXIDASE"/>
    <property type="match status" value="1"/>
</dbReference>
<dbReference type="Pfam" id="PF10590">
    <property type="entry name" value="PNP_phzG_C"/>
    <property type="match status" value="1"/>
</dbReference>
<dbReference type="Pfam" id="PF01243">
    <property type="entry name" value="PNPOx_N"/>
    <property type="match status" value="1"/>
</dbReference>
<dbReference type="PIRSF" id="PIRSF000190">
    <property type="entry name" value="Pyd_amn-ph_oxd"/>
    <property type="match status" value="1"/>
</dbReference>
<dbReference type="SUPFAM" id="SSF50475">
    <property type="entry name" value="FMN-binding split barrel"/>
    <property type="match status" value="1"/>
</dbReference>
<keyword id="KW-0285">Flavoprotein</keyword>
<keyword id="KW-0288">FMN</keyword>
<keyword id="KW-0560">Oxidoreductase</keyword>
<keyword id="KW-0664">Pyridoxine biosynthesis</keyword>
<keyword id="KW-1185">Reference proteome</keyword>
<feature type="chain" id="PRO_0000255851" description="Pyridoxine/pyridoxamine 5'-phosphate oxidase">
    <location>
        <begin position="1"/>
        <end position="198"/>
    </location>
</feature>
<feature type="binding site" evidence="1">
    <location>
        <begin position="47"/>
        <end position="52"/>
    </location>
    <ligand>
        <name>FMN</name>
        <dbReference type="ChEBI" id="CHEBI:58210"/>
    </ligand>
</feature>
<feature type="binding site" evidence="1">
    <location>
        <position position="52"/>
    </location>
    <ligand>
        <name>substrate</name>
    </ligand>
</feature>
<feature type="binding site" evidence="1">
    <location>
        <begin position="62"/>
        <end position="63"/>
    </location>
    <ligand>
        <name>FMN</name>
        <dbReference type="ChEBI" id="CHEBI:58210"/>
    </ligand>
</feature>
<feature type="binding site" evidence="1">
    <location>
        <position position="68"/>
    </location>
    <ligand>
        <name>FMN</name>
        <dbReference type="ChEBI" id="CHEBI:58210"/>
    </ligand>
</feature>
<feature type="binding site" evidence="1">
    <location>
        <position position="69"/>
    </location>
    <ligand>
        <name>FMN</name>
        <dbReference type="ChEBI" id="CHEBI:58210"/>
    </ligand>
</feature>
<feature type="binding site" evidence="1">
    <location>
        <position position="91"/>
    </location>
    <ligand>
        <name>FMN</name>
        <dbReference type="ChEBI" id="CHEBI:58210"/>
    </ligand>
</feature>
<feature type="binding site" evidence="1">
    <location>
        <position position="109"/>
    </location>
    <ligand>
        <name>substrate</name>
    </ligand>
</feature>
<feature type="binding site" evidence="1">
    <location>
        <position position="113"/>
    </location>
    <ligand>
        <name>substrate</name>
    </ligand>
</feature>
<feature type="binding site" evidence="1">
    <location>
        <position position="117"/>
    </location>
    <ligand>
        <name>substrate</name>
    </ligand>
</feature>
<feature type="binding site" evidence="1">
    <location>
        <begin position="126"/>
        <end position="127"/>
    </location>
    <ligand>
        <name>FMN</name>
        <dbReference type="ChEBI" id="CHEBI:58210"/>
    </ligand>
</feature>
<feature type="binding site" evidence="1">
    <location>
        <position position="171"/>
    </location>
    <ligand>
        <name>FMN</name>
        <dbReference type="ChEBI" id="CHEBI:58210"/>
    </ligand>
</feature>
<feature type="binding site" evidence="1">
    <location>
        <begin position="177"/>
        <end position="179"/>
    </location>
    <ligand>
        <name>substrate</name>
    </ligand>
</feature>
<feature type="binding site" evidence="1">
    <location>
        <position position="181"/>
    </location>
    <ligand>
        <name>FMN</name>
        <dbReference type="ChEBI" id="CHEBI:58210"/>
    </ligand>
</feature>
<organism>
    <name type="scientific">Anaeromyxobacter dehalogenans (strain 2CP-C)</name>
    <dbReference type="NCBI Taxonomy" id="290397"/>
    <lineage>
        <taxon>Bacteria</taxon>
        <taxon>Pseudomonadati</taxon>
        <taxon>Myxococcota</taxon>
        <taxon>Myxococcia</taxon>
        <taxon>Myxococcales</taxon>
        <taxon>Cystobacterineae</taxon>
        <taxon>Anaeromyxobacteraceae</taxon>
        <taxon>Anaeromyxobacter</taxon>
    </lineage>
</organism>
<evidence type="ECO:0000255" key="1">
    <source>
        <dbReference type="HAMAP-Rule" id="MF_01629"/>
    </source>
</evidence>
<proteinExistence type="inferred from homology"/>
<accession>Q2IHV2</accession>
<name>PDXH_ANADE</name>
<reference key="1">
    <citation type="submission" date="2006-01" db="EMBL/GenBank/DDBJ databases">
        <title>Complete sequence of Anaeromyxobacter dehalogenans 2CP-C.</title>
        <authorList>
            <person name="Copeland A."/>
            <person name="Lucas S."/>
            <person name="Lapidus A."/>
            <person name="Barry K."/>
            <person name="Detter J.C."/>
            <person name="Glavina T."/>
            <person name="Hammon N."/>
            <person name="Israni S."/>
            <person name="Pitluck S."/>
            <person name="Brettin T."/>
            <person name="Bruce D."/>
            <person name="Han C."/>
            <person name="Tapia R."/>
            <person name="Gilna P."/>
            <person name="Kiss H."/>
            <person name="Schmutz J."/>
            <person name="Larimer F."/>
            <person name="Land M."/>
            <person name="Kyrpides N."/>
            <person name="Anderson I."/>
            <person name="Sanford R.A."/>
            <person name="Ritalahti K.M."/>
            <person name="Thomas H.S."/>
            <person name="Kirby J.R."/>
            <person name="Zhulin I.B."/>
            <person name="Loeffler F.E."/>
            <person name="Richardson P."/>
        </authorList>
    </citation>
    <scope>NUCLEOTIDE SEQUENCE [LARGE SCALE GENOMIC DNA]</scope>
    <source>
        <strain>2CP-C</strain>
    </source>
</reference>
<sequence length="198" mass="21612">MPLPPSAAPDPIARFRDALARAAAASPHDATAAALATADARGAPSVRMVLVKSADARGFAFFTNRESRKARDLAANPRAALCFHWPALEEQVRVEGAVTPLPDAEADAYFRSRPRESRVGAWASRQSAPLGDRAELEAAVREVEARFPGDEIPRPPFWGGYLVAPERIEFWRSGPGRLHHRTVYVRRGDGWEVGALQP</sequence>
<comment type="function">
    <text evidence="1">Catalyzes the oxidation of either pyridoxine 5'-phosphate (PNP) or pyridoxamine 5'-phosphate (PMP) into pyridoxal 5'-phosphate (PLP).</text>
</comment>
<comment type="catalytic activity">
    <reaction evidence="1">
        <text>pyridoxamine 5'-phosphate + O2 + H2O = pyridoxal 5'-phosphate + H2O2 + NH4(+)</text>
        <dbReference type="Rhea" id="RHEA:15817"/>
        <dbReference type="ChEBI" id="CHEBI:15377"/>
        <dbReference type="ChEBI" id="CHEBI:15379"/>
        <dbReference type="ChEBI" id="CHEBI:16240"/>
        <dbReference type="ChEBI" id="CHEBI:28938"/>
        <dbReference type="ChEBI" id="CHEBI:58451"/>
        <dbReference type="ChEBI" id="CHEBI:597326"/>
        <dbReference type="EC" id="1.4.3.5"/>
    </reaction>
</comment>
<comment type="catalytic activity">
    <reaction evidence="1">
        <text>pyridoxine 5'-phosphate + O2 = pyridoxal 5'-phosphate + H2O2</text>
        <dbReference type="Rhea" id="RHEA:15149"/>
        <dbReference type="ChEBI" id="CHEBI:15379"/>
        <dbReference type="ChEBI" id="CHEBI:16240"/>
        <dbReference type="ChEBI" id="CHEBI:58589"/>
        <dbReference type="ChEBI" id="CHEBI:597326"/>
        <dbReference type="EC" id="1.4.3.5"/>
    </reaction>
</comment>
<comment type="cofactor">
    <cofactor evidence="1">
        <name>FMN</name>
        <dbReference type="ChEBI" id="CHEBI:58210"/>
    </cofactor>
    <text evidence="1">Binds 1 FMN per subunit.</text>
</comment>
<comment type="pathway">
    <text evidence="1">Cofactor metabolism; pyridoxal 5'-phosphate salvage; pyridoxal 5'-phosphate from pyridoxamine 5'-phosphate: step 1/1.</text>
</comment>
<comment type="pathway">
    <text evidence="1">Cofactor metabolism; pyridoxal 5'-phosphate salvage; pyridoxal 5'-phosphate from pyridoxine 5'-phosphate: step 1/1.</text>
</comment>
<comment type="subunit">
    <text evidence="1">Homodimer.</text>
</comment>
<comment type="similarity">
    <text evidence="1">Belongs to the pyridoxamine 5'-phosphate oxidase family.</text>
</comment>
<protein>
    <recommendedName>
        <fullName evidence="1">Pyridoxine/pyridoxamine 5'-phosphate oxidase</fullName>
        <ecNumber evidence="1">1.4.3.5</ecNumber>
    </recommendedName>
    <alternativeName>
        <fullName evidence="1">PNP/PMP oxidase</fullName>
        <shortName evidence="1">PNPOx</shortName>
    </alternativeName>
    <alternativeName>
        <fullName evidence="1">Pyridoxal 5'-phosphate synthase</fullName>
    </alternativeName>
</protein>
<gene>
    <name evidence="1" type="primary">pdxH</name>
    <name type="ordered locus">Adeh_1455</name>
</gene>